<organism>
    <name type="scientific">Homo sapiens</name>
    <name type="common">Human</name>
    <dbReference type="NCBI Taxonomy" id="9606"/>
    <lineage>
        <taxon>Eukaryota</taxon>
        <taxon>Metazoa</taxon>
        <taxon>Chordata</taxon>
        <taxon>Craniata</taxon>
        <taxon>Vertebrata</taxon>
        <taxon>Euteleostomi</taxon>
        <taxon>Mammalia</taxon>
        <taxon>Eutheria</taxon>
        <taxon>Euarchontoglires</taxon>
        <taxon>Primates</taxon>
        <taxon>Haplorrhini</taxon>
        <taxon>Catarrhini</taxon>
        <taxon>Hominidae</taxon>
        <taxon>Homo</taxon>
    </lineage>
</organism>
<proteinExistence type="evidence at protein level"/>
<feature type="chain" id="PRO_0000143937" description="Carotenoid-cleaving dioxygenase, mitochondrial">
    <location>
        <begin position="1"/>
        <end position="579"/>
    </location>
</feature>
<feature type="binding site" evidence="3">
    <location>
        <position position="226"/>
    </location>
    <ligand>
        <name>Fe cation</name>
        <dbReference type="ChEBI" id="CHEBI:24875"/>
        <note>catalytic</note>
    </ligand>
</feature>
<feature type="binding site" evidence="3">
    <location>
        <position position="286"/>
    </location>
    <ligand>
        <name>Fe cation</name>
        <dbReference type="ChEBI" id="CHEBI:24875"/>
        <note>catalytic</note>
    </ligand>
</feature>
<feature type="binding site" evidence="3">
    <location>
        <position position="357"/>
    </location>
    <ligand>
        <name>Fe cation</name>
        <dbReference type="ChEBI" id="CHEBI:24875"/>
        <note>catalytic</note>
    </ligand>
</feature>
<feature type="binding site" evidence="3">
    <location>
        <position position="573"/>
    </location>
    <ligand>
        <name>Fe cation</name>
        <dbReference type="ChEBI" id="CHEBI:24875"/>
        <note>catalytic</note>
    </ligand>
</feature>
<feature type="splice variant" id="VSP_046915" description="In isoform 6." evidence="11">
    <location>
        <begin position="1"/>
        <end position="105"/>
    </location>
</feature>
<feature type="splice variant" id="VSP_008599" description="In isoform 2 and isoform 4." evidence="11 13">
    <location>
        <begin position="1"/>
        <end position="34"/>
    </location>
</feature>
<feature type="splice variant" id="VSP_046916" description="In isoform 5." evidence="12">
    <location>
        <begin position="173"/>
        <end position="245"/>
    </location>
</feature>
<feature type="splice variant" id="VSP_008600" description="In isoform 4." evidence="11">
    <location>
        <begin position="501"/>
        <end position="506"/>
    </location>
</feature>
<feature type="sequence variant" id="VAR_047047" description="In dbSNP:rs10891338." evidence="4 5 8">
    <original>L</original>
    <variation>P</variation>
    <location>
        <position position="231"/>
    </location>
</feature>
<feature type="sequence variant" id="VAR_047048" description="In dbSNP:rs17113607.">
    <original>G</original>
    <variation>E</variation>
    <location>
        <position position="289"/>
    </location>
</feature>
<feature type="sequence variant" id="VAR_047049" description="In dbSNP:rs2217401." evidence="4 5 6 8 9">
    <original>I</original>
    <variation>L</variation>
    <location>
        <position position="548"/>
    </location>
</feature>
<feature type="sequence conflict" description="In Ref. 7; CAC27994." evidence="14" ref="7">
    <original>H</original>
    <variation>Y</variation>
    <location>
        <position position="26"/>
    </location>
</feature>
<feature type="sequence conflict" description="In Ref. 7; CAC27994." evidence="14" ref="7">
    <original>N</original>
    <variation>D</variation>
    <location>
        <position position="177"/>
    </location>
</feature>
<feature type="sequence conflict" description="In Ref. 7; CAC27994." evidence="14" ref="7">
    <original>K</original>
    <variation>E</variation>
    <location>
        <position position="258"/>
    </location>
</feature>
<feature type="sequence conflict" description="In Ref. 2; BAG60185." evidence="14" ref="2">
    <original>P</original>
    <variation>Q</variation>
    <location>
        <position position="429"/>
    </location>
</feature>
<feature type="sequence conflict" description="In Ref. 7; CAC27994." evidence="14" ref="7">
    <original>W</original>
    <variation>C</variation>
    <location>
        <position position="446"/>
    </location>
</feature>
<sequence length="579" mass="65674">MFFRVFLHFIRSHSATAVDFLPVMVHRLPVFKRYMGNTPQKKAVFGQCRGLPCVAPLLTTVEEAPRGISARVWGHFPKWLNGSLLRIGPGKFEFGKDKYNHWFDGMALLHQFRMAKGTVTYRSKFLQSDTYKANSAKNRIVISEFGTLALPDPCKNVFERFMSRFELPGKAAAMTDNTNVNYVRYKGDYYLCTETNFMNKVDIETLEKTEKVDWSKFIAVNGATAHPHYDLDGTAYNMGNSFGPYGFSYKVIRVPPEKVDLGETIHGVQVICSIASTEKGKPSYYHSFGMTRNYIIFIEQPLKMNLWKIATSKIRGKAFSDGISWEPQCNTRFHVVEKRTGQLLPGRYYSKPFVTFHQINAFEDQGCVIIDLCCQDNGRTLEVYQLQNLRKAGEGLDQVHNSAAKSFPRRFVLPLNVSLNAPEGDNLSPLSYTSASAVKQADGTIWCSHENLHQEDLEKEGGIEFPQIYYDRFSGKKYHFFYGCGFRHLVGDSLIKVDVVNKTLKVWREDGFYPSEPVFVPAPGTNEEDGGVILSVVITPNQNESNFILVLDAKNFEELGRAEVPVQMPYGFHGTFIPI</sequence>
<keyword id="KW-0025">Alternative splicing</keyword>
<keyword id="KW-0223">Dioxygenase</keyword>
<keyword id="KW-0408">Iron</keyword>
<keyword id="KW-0443">Lipid metabolism</keyword>
<keyword id="KW-0479">Metal-binding</keyword>
<keyword id="KW-0496">Mitochondrion</keyword>
<keyword id="KW-0560">Oxidoreductase</keyword>
<keyword id="KW-1267">Proteomics identification</keyword>
<keyword id="KW-1185">Reference proteome</keyword>
<dbReference type="EC" id="1.13.11.-" evidence="2"/>
<dbReference type="EC" id="1.13.11.71" evidence="2"/>
<dbReference type="EMBL" id="AF276432">
    <property type="protein sequence ID" value="AAK69433.1"/>
    <property type="molecule type" value="mRNA"/>
</dbReference>
<dbReference type="EMBL" id="AK027801">
    <property type="protein sequence ID" value="BAB55379.1"/>
    <property type="molecule type" value="mRNA"/>
</dbReference>
<dbReference type="EMBL" id="AK297853">
    <property type="protein sequence ID" value="BAG60185.1"/>
    <property type="molecule type" value="mRNA"/>
</dbReference>
<dbReference type="EMBL" id="EF444956">
    <property type="protein sequence ID" value="ACA05952.1"/>
    <property type="molecule type" value="Genomic_DNA"/>
</dbReference>
<dbReference type="EMBL" id="AP002884">
    <property type="status" value="NOT_ANNOTATED_CDS"/>
    <property type="molecule type" value="Genomic_DNA"/>
</dbReference>
<dbReference type="EMBL" id="CH471065">
    <property type="protein sequence ID" value="EAW67192.1"/>
    <property type="molecule type" value="Genomic_DNA"/>
</dbReference>
<dbReference type="EMBL" id="BC041656">
    <property type="protein sequence ID" value="AAH41656.2"/>
    <property type="molecule type" value="mRNA"/>
</dbReference>
<dbReference type="EMBL" id="AJ290393">
    <property type="protein sequence ID" value="CAC27994.1"/>
    <property type="status" value="ALT_INIT"/>
    <property type="molecule type" value="mRNA"/>
</dbReference>
<dbReference type="CCDS" id="CCDS41716.1">
    <molecule id="Q9BYV7-2"/>
</dbReference>
<dbReference type="CCDS" id="CCDS58181.1">
    <molecule id="Q9BYV7-5"/>
</dbReference>
<dbReference type="CCDS" id="CCDS58182.1">
    <molecule id="Q9BYV7-4"/>
</dbReference>
<dbReference type="CCDS" id="CCDS58183.1">
    <molecule id="Q9BYV7-6"/>
</dbReference>
<dbReference type="CCDS" id="CCDS8358.2">
    <molecule id="Q9BYV7-1"/>
</dbReference>
<dbReference type="RefSeq" id="NP_001032367.3">
    <molecule id="Q9BYV7-2"/>
    <property type="nucleotide sequence ID" value="NM_001037290.4"/>
</dbReference>
<dbReference type="RefSeq" id="NP_001243326.2">
    <molecule id="Q9BYV7-4"/>
    <property type="nucleotide sequence ID" value="NM_001256397.3"/>
</dbReference>
<dbReference type="RefSeq" id="NP_001243327.2">
    <molecule id="Q9BYV7-5"/>
    <property type="nucleotide sequence ID" value="NM_001256398.3"/>
</dbReference>
<dbReference type="RefSeq" id="NP_001243329.2">
    <molecule id="Q9BYV7-6"/>
    <property type="nucleotide sequence ID" value="NM_001256400.3"/>
</dbReference>
<dbReference type="RefSeq" id="NP_114144.4">
    <molecule id="Q9BYV7-1"/>
    <property type="nucleotide sequence ID" value="NM_031938.5"/>
</dbReference>
<dbReference type="SMR" id="Q9BYV7"/>
<dbReference type="BioGRID" id="123788">
    <property type="interactions" value="1"/>
</dbReference>
<dbReference type="FunCoup" id="Q9BYV7">
    <property type="interactions" value="838"/>
</dbReference>
<dbReference type="IntAct" id="Q9BYV7">
    <property type="interactions" value="1"/>
</dbReference>
<dbReference type="STRING" id="9606.ENSP00000350314"/>
<dbReference type="GlyGen" id="Q9BYV7">
    <property type="glycosylation" value="1 site, 1 O-linked glycan (1 site)"/>
</dbReference>
<dbReference type="iPTMnet" id="Q9BYV7"/>
<dbReference type="PhosphoSitePlus" id="Q9BYV7"/>
<dbReference type="SwissPalm" id="Q9BYV7"/>
<dbReference type="BioMuta" id="BCO2"/>
<dbReference type="DMDM" id="308153680"/>
<dbReference type="MassIVE" id="Q9BYV7"/>
<dbReference type="PaxDb" id="9606-ENSP00000350314"/>
<dbReference type="PeptideAtlas" id="Q9BYV7"/>
<dbReference type="ProteomicsDB" id="19234"/>
<dbReference type="ProteomicsDB" id="21156"/>
<dbReference type="ProteomicsDB" id="79718">
    <molecule id="Q9BYV7-1"/>
</dbReference>
<dbReference type="ProteomicsDB" id="79719">
    <molecule id="Q9BYV7-2"/>
</dbReference>
<dbReference type="ProteomicsDB" id="79720">
    <molecule id="Q9BYV7-4"/>
</dbReference>
<dbReference type="Antibodypedia" id="45628">
    <property type="antibodies" value="118 antibodies from 18 providers"/>
</dbReference>
<dbReference type="DNASU" id="83875"/>
<dbReference type="Ensembl" id="ENST00000357685.11">
    <molecule id="Q9BYV7-1"/>
    <property type="protein sequence ID" value="ENSP00000350314.5"/>
    <property type="gene ID" value="ENSG00000197580.13"/>
</dbReference>
<dbReference type="Ensembl" id="ENST00000361053.8">
    <molecule id="Q9BYV7-5"/>
    <property type="protein sequence ID" value="ENSP00000354338.4"/>
    <property type="gene ID" value="ENSG00000197580.13"/>
</dbReference>
<dbReference type="Ensembl" id="ENST00000438022.5">
    <molecule id="Q9BYV7-2"/>
    <property type="protein sequence ID" value="ENSP00000414843.1"/>
    <property type="gene ID" value="ENSG00000197580.13"/>
</dbReference>
<dbReference type="Ensembl" id="ENST00000526088.5">
    <molecule id="Q9BYV7-4"/>
    <property type="protein sequence ID" value="ENSP00000436615.1"/>
    <property type="gene ID" value="ENSG00000197580.13"/>
</dbReference>
<dbReference type="Ensembl" id="ENST00000531169.5">
    <molecule id="Q9BYV7-2"/>
    <property type="protein sequence ID" value="ENSP00000437053.1"/>
    <property type="gene ID" value="ENSG00000197580.13"/>
</dbReference>
<dbReference type="Ensembl" id="ENST00000532593.5">
    <molecule id="Q9BYV7-6"/>
    <property type="protein sequence ID" value="ENSP00000431802.1"/>
    <property type="gene ID" value="ENSG00000197580.13"/>
</dbReference>
<dbReference type="GeneID" id="83875"/>
<dbReference type="KEGG" id="hsa:83875"/>
<dbReference type="MANE-Select" id="ENST00000357685.11">
    <property type="protein sequence ID" value="ENSP00000350314.5"/>
    <property type="RefSeq nucleotide sequence ID" value="NM_031938.7"/>
    <property type="RefSeq protein sequence ID" value="NP_114144.5"/>
</dbReference>
<dbReference type="UCSC" id="uc001pnf.4">
    <molecule id="Q9BYV7-1"/>
    <property type="organism name" value="human"/>
</dbReference>
<dbReference type="AGR" id="HGNC:18503"/>
<dbReference type="CTD" id="83875"/>
<dbReference type="DisGeNET" id="83875"/>
<dbReference type="GeneCards" id="BCO2"/>
<dbReference type="HGNC" id="HGNC:18503">
    <property type="gene designation" value="BCO2"/>
</dbReference>
<dbReference type="HPA" id="ENSG00000197580">
    <property type="expression patterns" value="Tissue enhanced (heart muscle, liver, retina)"/>
</dbReference>
<dbReference type="MIM" id="611740">
    <property type="type" value="gene"/>
</dbReference>
<dbReference type="neXtProt" id="NX_Q9BYV7"/>
<dbReference type="OpenTargets" id="ENSG00000197580"/>
<dbReference type="PharmGKB" id="PA162377424"/>
<dbReference type="VEuPathDB" id="HostDB:ENSG00000197580"/>
<dbReference type="eggNOG" id="KOG1285">
    <property type="taxonomic scope" value="Eukaryota"/>
</dbReference>
<dbReference type="GeneTree" id="ENSGT00950000182913"/>
<dbReference type="InParanoid" id="Q9BYV7"/>
<dbReference type="OMA" id="WHIGDYN"/>
<dbReference type="OrthoDB" id="407010at2759"/>
<dbReference type="PAN-GO" id="Q9BYV7">
    <property type="GO annotations" value="5 GO annotations based on evolutionary models"/>
</dbReference>
<dbReference type="PhylomeDB" id="Q9BYV7"/>
<dbReference type="TreeFam" id="TF314019"/>
<dbReference type="BioCyc" id="MetaCyc:G66-33846-MONOMER"/>
<dbReference type="BRENDA" id="1.13.11.71">
    <property type="organism ID" value="2681"/>
</dbReference>
<dbReference type="PathwayCommons" id="Q9BYV7"/>
<dbReference type="Reactome" id="R-HSA-975634">
    <property type="pathway name" value="Retinoid metabolism and transport"/>
</dbReference>
<dbReference type="BioGRID-ORCS" id="83875">
    <property type="hits" value="11 hits in 1150 CRISPR screens"/>
</dbReference>
<dbReference type="ChiTaRS" id="BCO2">
    <property type="organism name" value="human"/>
</dbReference>
<dbReference type="GenomeRNAi" id="83875"/>
<dbReference type="Pharos" id="Q9BYV7">
    <property type="development level" value="Tbio"/>
</dbReference>
<dbReference type="PRO" id="PR:Q9BYV7"/>
<dbReference type="Proteomes" id="UP000005640">
    <property type="component" value="Chromosome 11"/>
</dbReference>
<dbReference type="RNAct" id="Q9BYV7">
    <property type="molecule type" value="protein"/>
</dbReference>
<dbReference type="Bgee" id="ENSG00000197580">
    <property type="expression patterns" value="Expressed in right lobe of liver and 141 other cell types or tissues"/>
</dbReference>
<dbReference type="ExpressionAtlas" id="Q9BYV7">
    <property type="expression patterns" value="baseline and differential"/>
</dbReference>
<dbReference type="GO" id="GO:0005759">
    <property type="term" value="C:mitochondrial matrix"/>
    <property type="evidence" value="ECO:0000304"/>
    <property type="project" value="Reactome"/>
</dbReference>
<dbReference type="GO" id="GO:0005739">
    <property type="term" value="C:mitochondrion"/>
    <property type="evidence" value="ECO:0000250"/>
    <property type="project" value="UniProtKB"/>
</dbReference>
<dbReference type="GO" id="GO:0010437">
    <property type="term" value="F:9,10 (9', 10')-carotenoid-cleaving dioxygenase activity"/>
    <property type="evidence" value="ECO:0000250"/>
    <property type="project" value="UniProtKB"/>
</dbReference>
<dbReference type="GO" id="GO:0102076">
    <property type="term" value="F:beta,beta-carotene-9',10'-cleaving oxygenase activity"/>
    <property type="evidence" value="ECO:0000250"/>
    <property type="project" value="UniProtKB"/>
</dbReference>
<dbReference type="GO" id="GO:0003834">
    <property type="term" value="F:beta-carotene 15,15'-dioxygenase activity"/>
    <property type="evidence" value="ECO:0000318"/>
    <property type="project" value="GO_Central"/>
</dbReference>
<dbReference type="GO" id="GO:0010436">
    <property type="term" value="F:carotenoid dioxygenase activity"/>
    <property type="evidence" value="ECO:0000318"/>
    <property type="project" value="GO_Central"/>
</dbReference>
<dbReference type="GO" id="GO:0046872">
    <property type="term" value="F:metal ion binding"/>
    <property type="evidence" value="ECO:0007669"/>
    <property type="project" value="UniProtKB-KW"/>
</dbReference>
<dbReference type="GO" id="GO:0016702">
    <property type="term" value="F:oxidoreductase activity, acting on single donors with incorporation of molecular oxygen, incorporation of two atoms of oxygen"/>
    <property type="evidence" value="ECO:0000314"/>
    <property type="project" value="UniProtKB"/>
</dbReference>
<dbReference type="GO" id="GO:0016121">
    <property type="term" value="P:carotene catabolic process"/>
    <property type="evidence" value="ECO:0000314"/>
    <property type="project" value="BHF-UCL"/>
</dbReference>
<dbReference type="GO" id="GO:0016119">
    <property type="term" value="P:carotene metabolic process"/>
    <property type="evidence" value="ECO:0000314"/>
    <property type="project" value="UniProtKB"/>
</dbReference>
<dbReference type="GO" id="GO:0016116">
    <property type="term" value="P:carotenoid metabolic process"/>
    <property type="evidence" value="ECO:0000250"/>
    <property type="project" value="BHF-UCL"/>
</dbReference>
<dbReference type="GO" id="GO:0062172">
    <property type="term" value="P:lutein catabolic process"/>
    <property type="evidence" value="ECO:0000250"/>
    <property type="project" value="UniProtKB"/>
</dbReference>
<dbReference type="GO" id="GO:1901176">
    <property type="term" value="P:lycopene catabolic process"/>
    <property type="evidence" value="ECO:0000250"/>
    <property type="project" value="UniProtKB"/>
</dbReference>
<dbReference type="GO" id="GO:0051881">
    <property type="term" value="P:regulation of mitochondrial membrane potential"/>
    <property type="evidence" value="ECO:0000250"/>
    <property type="project" value="BHF-UCL"/>
</dbReference>
<dbReference type="GO" id="GO:2000377">
    <property type="term" value="P:regulation of reactive oxygen species metabolic process"/>
    <property type="evidence" value="ECO:0000250"/>
    <property type="project" value="BHF-UCL"/>
</dbReference>
<dbReference type="GO" id="GO:0042574">
    <property type="term" value="P:retinal metabolic process"/>
    <property type="evidence" value="ECO:0000318"/>
    <property type="project" value="GO_Central"/>
</dbReference>
<dbReference type="GO" id="GO:0042573">
    <property type="term" value="P:retinoic acid metabolic process"/>
    <property type="evidence" value="ECO:0000303"/>
    <property type="project" value="UniProtKB"/>
</dbReference>
<dbReference type="GO" id="GO:0016124">
    <property type="term" value="P:xanthophyll catabolic process"/>
    <property type="evidence" value="ECO:0000250"/>
    <property type="project" value="UniProtKB"/>
</dbReference>
<dbReference type="GO" id="GO:1901826">
    <property type="term" value="P:zeaxanthin catabolic process"/>
    <property type="evidence" value="ECO:0000250"/>
    <property type="project" value="UniProtKB"/>
</dbReference>
<dbReference type="InterPro" id="IPR004294">
    <property type="entry name" value="Carotenoid_Oase"/>
</dbReference>
<dbReference type="PANTHER" id="PTHR10543">
    <property type="entry name" value="BETA-CAROTENE DIOXYGENASE"/>
    <property type="match status" value="1"/>
</dbReference>
<dbReference type="PANTHER" id="PTHR10543:SF122">
    <property type="entry name" value="CAROTENOID-CLEAVING DIOXYGENASE, MITOCHONDRIAL"/>
    <property type="match status" value="1"/>
</dbReference>
<dbReference type="Pfam" id="PF03055">
    <property type="entry name" value="RPE65"/>
    <property type="match status" value="1"/>
</dbReference>
<accession>Q9BYV7</accession>
<accession>B0YIX5</accession>
<accession>B4DNC3</accession>
<accession>E9PBI8</accession>
<accession>E9PJJ1</accession>
<accession>Q8IUS0</accession>
<accession>Q96JC8</accession>
<accession>Q96JY5</accession>
<name>BCDO2_HUMAN</name>
<gene>
    <name evidence="15" type="primary">BCO2</name>
    <name evidence="15" type="synonym">BCDO2</name>
</gene>
<evidence type="ECO:0000250" key="1">
    <source>
        <dbReference type="UniProtKB" id="Q6QT07"/>
    </source>
</evidence>
<evidence type="ECO:0000250" key="2">
    <source>
        <dbReference type="UniProtKB" id="Q99NF1"/>
    </source>
</evidence>
<evidence type="ECO:0000250" key="3">
    <source>
        <dbReference type="UniProtKB" id="Q9JJS6"/>
    </source>
</evidence>
<evidence type="ECO:0000269" key="4">
    <source>
    </source>
</evidence>
<evidence type="ECO:0000269" key="5">
    <source>
    </source>
</evidence>
<evidence type="ECO:0000269" key="6">
    <source>
    </source>
</evidence>
<evidence type="ECO:0000269" key="7">
    <source>
    </source>
</evidence>
<evidence type="ECO:0000269" key="8">
    <source ref="1"/>
</evidence>
<evidence type="ECO:0000269" key="9">
    <source ref="5"/>
</evidence>
<evidence type="ECO:0000303" key="10">
    <source>
    </source>
</evidence>
<evidence type="ECO:0000303" key="11">
    <source>
    </source>
</evidence>
<evidence type="ECO:0000303" key="12">
    <source>
    </source>
</evidence>
<evidence type="ECO:0000303" key="13">
    <source ref="1"/>
</evidence>
<evidence type="ECO:0000305" key="14"/>
<evidence type="ECO:0000312" key="15">
    <source>
        <dbReference type="HGNC" id="HGNC:18503"/>
    </source>
</evidence>
<reference key="1">
    <citation type="submission" date="2000-06" db="EMBL/GenBank/DDBJ databases">
        <title>An ortholog of the human retinal pigment epithelium protein RPE65.</title>
        <authorList>
            <person name="Cunningham F.X. Jr."/>
        </authorList>
    </citation>
    <scope>NUCLEOTIDE SEQUENCE [MRNA] (ISOFORM 2)</scope>
    <scope>VARIANTS PRO-231 AND LEU-548</scope>
    <source>
        <tissue>Uterus</tissue>
    </source>
</reference>
<reference key="2">
    <citation type="journal article" date="2004" name="Nat. Genet.">
        <title>Complete sequencing and characterization of 21,243 full-length human cDNAs.</title>
        <authorList>
            <person name="Ota T."/>
            <person name="Suzuki Y."/>
            <person name="Nishikawa T."/>
            <person name="Otsuki T."/>
            <person name="Sugiyama T."/>
            <person name="Irie R."/>
            <person name="Wakamatsu A."/>
            <person name="Hayashi K."/>
            <person name="Sato H."/>
            <person name="Nagai K."/>
            <person name="Kimura K."/>
            <person name="Makita H."/>
            <person name="Sekine M."/>
            <person name="Obayashi M."/>
            <person name="Nishi T."/>
            <person name="Shibahara T."/>
            <person name="Tanaka T."/>
            <person name="Ishii S."/>
            <person name="Yamamoto J."/>
            <person name="Saito K."/>
            <person name="Kawai Y."/>
            <person name="Isono Y."/>
            <person name="Nakamura Y."/>
            <person name="Nagahari K."/>
            <person name="Murakami K."/>
            <person name="Yasuda T."/>
            <person name="Iwayanagi T."/>
            <person name="Wagatsuma M."/>
            <person name="Shiratori A."/>
            <person name="Sudo H."/>
            <person name="Hosoiri T."/>
            <person name="Kaku Y."/>
            <person name="Kodaira H."/>
            <person name="Kondo H."/>
            <person name="Sugawara M."/>
            <person name="Takahashi M."/>
            <person name="Kanda K."/>
            <person name="Yokoi T."/>
            <person name="Furuya T."/>
            <person name="Kikkawa E."/>
            <person name="Omura Y."/>
            <person name="Abe K."/>
            <person name="Kamihara K."/>
            <person name="Katsuta N."/>
            <person name="Sato K."/>
            <person name="Tanikawa M."/>
            <person name="Yamazaki M."/>
            <person name="Ninomiya K."/>
            <person name="Ishibashi T."/>
            <person name="Yamashita H."/>
            <person name="Murakawa K."/>
            <person name="Fujimori K."/>
            <person name="Tanai H."/>
            <person name="Kimata M."/>
            <person name="Watanabe M."/>
            <person name="Hiraoka S."/>
            <person name="Chiba Y."/>
            <person name="Ishida S."/>
            <person name="Ono Y."/>
            <person name="Takiguchi S."/>
            <person name="Watanabe S."/>
            <person name="Yosida M."/>
            <person name="Hotuta T."/>
            <person name="Kusano J."/>
            <person name="Kanehori K."/>
            <person name="Takahashi-Fujii A."/>
            <person name="Hara H."/>
            <person name="Tanase T.-O."/>
            <person name="Nomura Y."/>
            <person name="Togiya S."/>
            <person name="Komai F."/>
            <person name="Hara R."/>
            <person name="Takeuchi K."/>
            <person name="Arita M."/>
            <person name="Imose N."/>
            <person name="Musashino K."/>
            <person name="Yuuki H."/>
            <person name="Oshima A."/>
            <person name="Sasaki N."/>
            <person name="Aotsuka S."/>
            <person name="Yoshikawa Y."/>
            <person name="Matsunawa H."/>
            <person name="Ichihara T."/>
            <person name="Shiohata N."/>
            <person name="Sano S."/>
            <person name="Moriya S."/>
            <person name="Momiyama H."/>
            <person name="Satoh N."/>
            <person name="Takami S."/>
            <person name="Terashima Y."/>
            <person name="Suzuki O."/>
            <person name="Nakagawa S."/>
            <person name="Senoh A."/>
            <person name="Mizoguchi H."/>
            <person name="Goto Y."/>
            <person name="Shimizu F."/>
            <person name="Wakebe H."/>
            <person name="Hishigaki H."/>
            <person name="Watanabe T."/>
            <person name="Sugiyama A."/>
            <person name="Takemoto M."/>
            <person name="Kawakami B."/>
            <person name="Yamazaki M."/>
            <person name="Watanabe K."/>
            <person name="Kumagai A."/>
            <person name="Itakura S."/>
            <person name="Fukuzumi Y."/>
            <person name="Fujimori Y."/>
            <person name="Komiyama M."/>
            <person name="Tashiro H."/>
            <person name="Tanigami A."/>
            <person name="Fujiwara T."/>
            <person name="Ono T."/>
            <person name="Yamada K."/>
            <person name="Fujii Y."/>
            <person name="Ozaki K."/>
            <person name="Hirao M."/>
            <person name="Ohmori Y."/>
            <person name="Kawabata A."/>
            <person name="Hikiji T."/>
            <person name="Kobatake N."/>
            <person name="Inagaki H."/>
            <person name="Ikema Y."/>
            <person name="Okamoto S."/>
            <person name="Okitani R."/>
            <person name="Kawakami T."/>
            <person name="Noguchi S."/>
            <person name="Itoh T."/>
            <person name="Shigeta K."/>
            <person name="Senba T."/>
            <person name="Matsumura K."/>
            <person name="Nakajima Y."/>
            <person name="Mizuno T."/>
            <person name="Morinaga M."/>
            <person name="Sasaki M."/>
            <person name="Togashi T."/>
            <person name="Oyama M."/>
            <person name="Hata H."/>
            <person name="Watanabe M."/>
            <person name="Komatsu T."/>
            <person name="Mizushima-Sugano J."/>
            <person name="Satoh T."/>
            <person name="Shirai Y."/>
            <person name="Takahashi Y."/>
            <person name="Nakagawa K."/>
            <person name="Okumura K."/>
            <person name="Nagase T."/>
            <person name="Nomura N."/>
            <person name="Kikuchi H."/>
            <person name="Masuho Y."/>
            <person name="Yamashita R."/>
            <person name="Nakai K."/>
            <person name="Yada T."/>
            <person name="Nakamura Y."/>
            <person name="Ohara O."/>
            <person name="Isogai T."/>
            <person name="Sugano S."/>
        </authorList>
    </citation>
    <scope>NUCLEOTIDE SEQUENCE [LARGE SCALE MRNA] (ISOFORMS 4 AND 6)</scope>
    <scope>VARIANTS PRO-231 AND LEU-548</scope>
    <source>
        <tissue>Heart</tissue>
        <tissue>Placenta</tissue>
    </source>
</reference>
<reference key="3">
    <citation type="submission" date="2007-02" db="EMBL/GenBank/DDBJ databases">
        <authorList>
            <consortium name="NHLBI resequencing and genotyping service (RS&amp;G)"/>
        </authorList>
    </citation>
    <scope>NUCLEOTIDE SEQUENCE [GENOMIC DNA]</scope>
</reference>
<reference key="4">
    <citation type="journal article" date="2006" name="Nature">
        <title>Human chromosome 11 DNA sequence and analysis including novel gene identification.</title>
        <authorList>
            <person name="Taylor T.D."/>
            <person name="Noguchi H."/>
            <person name="Totoki Y."/>
            <person name="Toyoda A."/>
            <person name="Kuroki Y."/>
            <person name="Dewar K."/>
            <person name="Lloyd C."/>
            <person name="Itoh T."/>
            <person name="Takeda T."/>
            <person name="Kim D.-W."/>
            <person name="She X."/>
            <person name="Barlow K.F."/>
            <person name="Bloom T."/>
            <person name="Bruford E."/>
            <person name="Chang J.L."/>
            <person name="Cuomo C.A."/>
            <person name="Eichler E."/>
            <person name="FitzGerald M.G."/>
            <person name="Jaffe D.B."/>
            <person name="LaButti K."/>
            <person name="Nicol R."/>
            <person name="Park H.-S."/>
            <person name="Seaman C."/>
            <person name="Sougnez C."/>
            <person name="Yang X."/>
            <person name="Zimmer A.R."/>
            <person name="Zody M.C."/>
            <person name="Birren B.W."/>
            <person name="Nusbaum C."/>
            <person name="Fujiyama A."/>
            <person name="Hattori M."/>
            <person name="Rogers J."/>
            <person name="Lander E.S."/>
            <person name="Sakaki Y."/>
        </authorList>
    </citation>
    <scope>NUCLEOTIDE SEQUENCE [LARGE SCALE GENOMIC DNA]</scope>
</reference>
<reference key="5">
    <citation type="submission" date="2005-07" db="EMBL/GenBank/DDBJ databases">
        <authorList>
            <person name="Mural R.J."/>
            <person name="Istrail S."/>
            <person name="Sutton G."/>
            <person name="Florea L."/>
            <person name="Halpern A.L."/>
            <person name="Mobarry C.M."/>
            <person name="Lippert R."/>
            <person name="Walenz B."/>
            <person name="Shatkay H."/>
            <person name="Dew I."/>
            <person name="Miller J.R."/>
            <person name="Flanigan M.J."/>
            <person name="Edwards N.J."/>
            <person name="Bolanos R."/>
            <person name="Fasulo D."/>
            <person name="Halldorsson B.V."/>
            <person name="Hannenhalli S."/>
            <person name="Turner R."/>
            <person name="Yooseph S."/>
            <person name="Lu F."/>
            <person name="Nusskern D.R."/>
            <person name="Shue B.C."/>
            <person name="Zheng X.H."/>
            <person name="Zhong F."/>
            <person name="Delcher A.L."/>
            <person name="Huson D.H."/>
            <person name="Kravitz S.A."/>
            <person name="Mouchard L."/>
            <person name="Reinert K."/>
            <person name="Remington K.A."/>
            <person name="Clark A.G."/>
            <person name="Waterman M.S."/>
            <person name="Eichler E.E."/>
            <person name="Adams M.D."/>
            <person name="Hunkapiller M.W."/>
            <person name="Myers E.W."/>
            <person name="Venter J.C."/>
        </authorList>
    </citation>
    <scope>NUCLEOTIDE SEQUENCE [LARGE SCALE GENOMIC DNA]</scope>
    <scope>VARIANT LEU-548</scope>
</reference>
<reference key="6">
    <citation type="journal article" date="2004" name="Genome Res.">
        <title>The status, quality, and expansion of the NIH full-length cDNA project: the Mammalian Gene Collection (MGC).</title>
        <authorList>
            <consortium name="The MGC Project Team"/>
        </authorList>
    </citation>
    <scope>NUCLEOTIDE SEQUENCE [LARGE SCALE MRNA] (ISOFORM 5)</scope>
    <scope>VARIANT LEU-548</scope>
    <source>
        <tissue>Brain</tissue>
    </source>
</reference>
<reference key="7">
    <citation type="journal article" date="2001" name="J. Biol. Chem.">
        <title>Identification and characterization of a mammalian enzyme catalyzing the asymmetric oxidative cleavage of provitamin A.</title>
        <authorList>
            <person name="Kiefer C."/>
            <person name="Hessel S."/>
            <person name="Lampert J.M."/>
            <person name="Vogt K."/>
            <person name="Lederer M.O."/>
            <person name="Breithaupt D.E."/>
            <person name="von Lintig J."/>
        </authorList>
    </citation>
    <scope>NUCLEOTIDE SEQUENCE [MRNA] OF 17-579 (ISOFORM 1)</scope>
    <scope>VARIANTS PRO-231 AND LEU-548</scope>
    <source>
        <tissue>Liver</tissue>
    </source>
</reference>
<reference key="8">
    <citation type="journal article" date="2005" name="J. Histochem. Cytochem.">
        <title>Cell type-specific expression of beta-carotene 9',10'-monooxygenase in human tissues.</title>
        <authorList>
            <person name="Lindqvist A."/>
            <person name="He Y.-G."/>
            <person name="Andersson S."/>
        </authorList>
    </citation>
    <scope>TISSUE SPECIFICITY</scope>
</reference>
<protein>
    <recommendedName>
        <fullName evidence="2">Carotenoid-cleaving dioxygenase, mitochondrial</fullName>
        <ecNumber evidence="2">1.13.11.-</ecNumber>
        <ecNumber evidence="2">1.13.11.71</ecNumber>
    </recommendedName>
    <alternativeName>
        <fullName evidence="10">B-diox-II</fullName>
    </alternativeName>
    <alternativeName>
        <fullName evidence="10">Beta,beta-carotene 9',10'-oxygenase</fullName>
    </alternativeName>
    <alternativeName>
        <fullName evidence="15">Beta-carotene dioxygenase 2</fullName>
    </alternativeName>
</protein>
<comment type="function">
    <text evidence="2">Broad specificity mitochondrial dioxygenase that mediates the asymmetric oxidative cleavage of carotenoids. Cleaves carotenes (pure hydrocarbon carotenoids) such as all-trans-beta-carotene and lycopene as well as xanthophylls (oxygenated carotenoids) such as zeaxanthin, lutein and beta-cryptoxanthin at both the 9,10 and the 9',10' carbon-carbon double bond. Through its function in carotenoids metabolism regulates oxidative stress and the production of important signaling molecules.</text>
</comment>
<comment type="catalytic activity">
    <reaction evidence="2">
        <text>all-trans-beta-carotene + O2 = beta-ionone + all-trans-10'-apo-beta-carotenal</text>
        <dbReference type="Rhea" id="RHEA:26389"/>
        <dbReference type="ChEBI" id="CHEBI:15379"/>
        <dbReference type="ChEBI" id="CHEBI:17579"/>
        <dbReference type="ChEBI" id="CHEBI:32325"/>
        <dbReference type="ChEBI" id="CHEBI:53153"/>
        <dbReference type="EC" id="1.13.11.71"/>
    </reaction>
    <physiologicalReaction direction="left-to-right" evidence="2">
        <dbReference type="Rhea" id="RHEA:26390"/>
    </physiologicalReaction>
</comment>
<comment type="catalytic activity">
    <reaction evidence="1">
        <text>5-cis-lycopene + O2 = 5-cis-10'-apo-lycopenal + (3E,5E)-6,10-dimethylundeca-3,5,9-trien-2-one</text>
        <dbReference type="Rhea" id="RHEA:68444"/>
        <dbReference type="ChEBI" id="CHEBI:15379"/>
        <dbReference type="ChEBI" id="CHEBI:67207"/>
        <dbReference type="ChEBI" id="CHEBI:177905"/>
        <dbReference type="ChEBI" id="CHEBI:177906"/>
    </reaction>
    <physiologicalReaction direction="left-to-right" evidence="1">
        <dbReference type="Rhea" id="RHEA:68445"/>
    </physiologicalReaction>
</comment>
<comment type="catalytic activity">
    <reaction evidence="1">
        <text>13-cis-lycopene + O2 = 13-cis-10'-apo-lycopenal + (3E,5E)-6,10-dimethylundeca-3,5,9-trien-2-one</text>
        <dbReference type="Rhea" id="RHEA:68448"/>
        <dbReference type="ChEBI" id="CHEBI:15379"/>
        <dbReference type="ChEBI" id="CHEBI:67207"/>
        <dbReference type="ChEBI" id="CHEBI:177907"/>
        <dbReference type="ChEBI" id="CHEBI:177908"/>
    </reaction>
    <physiologicalReaction direction="left-to-right" evidence="1">
        <dbReference type="Rhea" id="RHEA:68449"/>
    </physiologicalReaction>
</comment>
<comment type="catalytic activity">
    <reaction evidence="2">
        <text>lutein + O2 = (3R,6R)-hydroxy-alpha-ionone + (3R)-3-hydroxy-10'-apo-beta-carotenal</text>
        <dbReference type="Rhea" id="RHEA:68428"/>
        <dbReference type="ChEBI" id="CHEBI:15379"/>
        <dbReference type="ChEBI" id="CHEBI:28838"/>
        <dbReference type="ChEBI" id="CHEBI:177902"/>
        <dbReference type="ChEBI" id="CHEBI:177904"/>
    </reaction>
    <physiologicalReaction direction="left-to-right" evidence="2">
        <dbReference type="Rhea" id="RHEA:68429"/>
    </physiologicalReaction>
</comment>
<comment type="catalytic activity">
    <reaction evidence="2">
        <text>lutein + O2 = (3R,6R)-3-hydroxy-10'-apo-alpha-carotenal + (3R)-hydroxy-beta-ionone</text>
        <dbReference type="Rhea" id="RHEA:68432"/>
        <dbReference type="ChEBI" id="CHEBI:15379"/>
        <dbReference type="ChEBI" id="CHEBI:28838"/>
        <dbReference type="ChEBI" id="CHEBI:53173"/>
        <dbReference type="ChEBI" id="CHEBI:177903"/>
    </reaction>
    <physiologicalReaction direction="left-to-right" evidence="2">
        <dbReference type="Rhea" id="RHEA:68433"/>
    </physiologicalReaction>
</comment>
<comment type="catalytic activity">
    <reaction evidence="2">
        <text>all-trans-zeaxanthin + 2 O2 = 4,9-dimethyldodeca-2,4,6,8,10-pentaenedial + 2 (3R)-hydroxy-beta-ionone</text>
        <dbReference type="Rhea" id="RHEA:26393"/>
        <dbReference type="ChEBI" id="CHEBI:15379"/>
        <dbReference type="ChEBI" id="CHEBI:27547"/>
        <dbReference type="ChEBI" id="CHEBI:53171"/>
        <dbReference type="ChEBI" id="CHEBI:53173"/>
    </reaction>
    <physiologicalReaction direction="left-to-right" evidence="2">
        <dbReference type="Rhea" id="RHEA:26394"/>
    </physiologicalReaction>
</comment>
<comment type="catalytic activity">
    <reaction evidence="2">
        <text>all-trans-zeaxanthin + O2 = (3R)-3-hydroxy-10'-apo-beta-carotenal + (3R)-hydroxy-beta-ionone</text>
        <dbReference type="Rhea" id="RHEA:68104"/>
        <dbReference type="ChEBI" id="CHEBI:15379"/>
        <dbReference type="ChEBI" id="CHEBI:27547"/>
        <dbReference type="ChEBI" id="CHEBI:53173"/>
        <dbReference type="ChEBI" id="CHEBI:177902"/>
    </reaction>
    <physiologicalReaction direction="left-to-right" evidence="2">
        <dbReference type="Rhea" id="RHEA:68105"/>
    </physiologicalReaction>
</comment>
<comment type="catalytic activity">
    <reaction evidence="2">
        <text>beta-cryptoxanthin + O2 = all-trans-10'-apo-beta-carotenal + (3R)-hydroxy-beta-ionone</text>
        <dbReference type="Rhea" id="RHEA:68440"/>
        <dbReference type="ChEBI" id="CHEBI:10362"/>
        <dbReference type="ChEBI" id="CHEBI:15379"/>
        <dbReference type="ChEBI" id="CHEBI:53153"/>
        <dbReference type="ChEBI" id="CHEBI:53173"/>
    </reaction>
    <physiologicalReaction direction="left-to-right" evidence="2">
        <dbReference type="Rhea" id="RHEA:68441"/>
    </physiologicalReaction>
</comment>
<comment type="catalytic activity">
    <reaction evidence="2">
        <text>all-trans-10'-apo-beta-carotenal + O2 = beta-ionone + 4,9-dimethyldodeca-2,4,6,8,10-pentaenedial</text>
        <dbReference type="Rhea" id="RHEA:68452"/>
        <dbReference type="ChEBI" id="CHEBI:15379"/>
        <dbReference type="ChEBI" id="CHEBI:32325"/>
        <dbReference type="ChEBI" id="CHEBI:53153"/>
        <dbReference type="ChEBI" id="CHEBI:53171"/>
    </reaction>
    <physiologicalReaction direction="left-to-right" evidence="2">
        <dbReference type="Rhea" id="RHEA:68453"/>
    </physiologicalReaction>
</comment>
<comment type="catalytic activity">
    <reaction evidence="2">
        <text>(3R)-3-hydroxy-10'-apo-beta-carotenal + O2 = 4,9-dimethyldodeca-2,4,6,8,10-pentaenedial + (3R)-hydroxy-beta-ionone</text>
        <dbReference type="Rhea" id="RHEA:68424"/>
        <dbReference type="ChEBI" id="CHEBI:15379"/>
        <dbReference type="ChEBI" id="CHEBI:53171"/>
        <dbReference type="ChEBI" id="CHEBI:53173"/>
        <dbReference type="ChEBI" id="CHEBI:177902"/>
    </reaction>
    <physiologicalReaction direction="left-to-right" evidence="2">
        <dbReference type="Rhea" id="RHEA:68425"/>
    </physiologicalReaction>
</comment>
<comment type="catalytic activity">
    <reaction evidence="2">
        <text>(3R,6R)-3-hydroxy-10'-apo-alpha-carotenal + O2 = (3R,6R)-hydroxy-alpha-ionone + 4,9-dimethyldodeca-2,4,6,8,10-pentaenedial</text>
        <dbReference type="Rhea" id="RHEA:68436"/>
        <dbReference type="ChEBI" id="CHEBI:15379"/>
        <dbReference type="ChEBI" id="CHEBI:53171"/>
        <dbReference type="ChEBI" id="CHEBI:177903"/>
        <dbReference type="ChEBI" id="CHEBI:177904"/>
    </reaction>
    <physiologicalReaction direction="left-to-right" evidence="2">
        <dbReference type="Rhea" id="RHEA:68437"/>
    </physiologicalReaction>
</comment>
<comment type="cofactor">
    <cofactor evidence="1">
        <name>Fe(2+)</name>
        <dbReference type="ChEBI" id="CHEBI:29033"/>
    </cofactor>
    <text evidence="1">Binds 1 Fe(2+) ion per subunit.</text>
</comment>
<comment type="subcellular location">
    <subcellularLocation>
        <location evidence="2">Mitochondrion</location>
    </subcellularLocation>
</comment>
<comment type="alternative products">
    <event type="alternative splicing"/>
    <isoform>
        <id>Q9BYV7-1</id>
        <name>1</name>
        <sequence type="displayed"/>
    </isoform>
    <isoform>
        <id>Q9BYV7-2</id>
        <name>2</name>
        <sequence type="described" ref="VSP_008599"/>
    </isoform>
    <isoform>
        <id>Q9BYV7-4</id>
        <name>4</name>
        <sequence type="described" ref="VSP_008599 VSP_008600"/>
    </isoform>
    <isoform>
        <id>Q9BYV7-5</id>
        <name>5</name>
        <sequence type="described" ref="VSP_046916"/>
    </isoform>
    <isoform>
        <id>Q9BYV7-6</id>
        <name>6</name>
        <sequence type="described" ref="VSP_046915"/>
    </isoform>
</comment>
<comment type="tissue specificity">
    <text evidence="7">Highly expressed in retinal pigment epithelium. Also expressed in stomach, small intestine, liver, testis, kidney, adrenal gland, pancreas, heart, skeletal muscle and prostate (at protein level).</text>
</comment>
<comment type="similarity">
    <text evidence="14">Belongs to the carotenoid oxygenase family.</text>
</comment>
<comment type="sequence caution" evidence="14">
    <conflict type="erroneous initiation">
        <sequence resource="EMBL-CDS" id="CAC27994"/>
    </conflict>
    <text>Truncated N-terminus.</text>
</comment>